<accession>Q5P340</accession>
<protein>
    <recommendedName>
        <fullName evidence="1">Large ribosomal subunit protein bL12</fullName>
    </recommendedName>
    <alternativeName>
        <fullName evidence="2">50S ribosomal protein L7/L12</fullName>
    </alternativeName>
</protein>
<proteinExistence type="inferred from homology"/>
<organism>
    <name type="scientific">Aromatoleum aromaticum (strain DSM 19018 / LMG 30748 / EbN1)</name>
    <name type="common">Azoarcus sp. (strain EbN1)</name>
    <dbReference type="NCBI Taxonomy" id="76114"/>
    <lineage>
        <taxon>Bacteria</taxon>
        <taxon>Pseudomonadati</taxon>
        <taxon>Pseudomonadota</taxon>
        <taxon>Betaproteobacteria</taxon>
        <taxon>Rhodocyclales</taxon>
        <taxon>Rhodocyclaceae</taxon>
        <taxon>Aromatoleum</taxon>
    </lineage>
</organism>
<keyword id="KW-1185">Reference proteome</keyword>
<keyword id="KW-0687">Ribonucleoprotein</keyword>
<keyword id="KW-0689">Ribosomal protein</keyword>
<reference key="1">
    <citation type="journal article" date="2005" name="Arch. Microbiol.">
        <title>The genome sequence of an anaerobic aromatic-degrading denitrifying bacterium, strain EbN1.</title>
        <authorList>
            <person name="Rabus R."/>
            <person name="Kube M."/>
            <person name="Heider J."/>
            <person name="Beck A."/>
            <person name="Heitmann K."/>
            <person name="Widdel F."/>
            <person name="Reinhardt R."/>
        </authorList>
    </citation>
    <scope>NUCLEOTIDE SEQUENCE [LARGE SCALE GENOMIC DNA]</scope>
    <source>
        <strain>DSM 19018 / LMG 30748 / EbN1</strain>
    </source>
</reference>
<evidence type="ECO:0000255" key="1">
    <source>
        <dbReference type="HAMAP-Rule" id="MF_00368"/>
    </source>
</evidence>
<evidence type="ECO:0000305" key="2"/>
<dbReference type="EMBL" id="CR555306">
    <property type="protein sequence ID" value="CAI08274.1"/>
    <property type="molecule type" value="Genomic_DNA"/>
</dbReference>
<dbReference type="RefSeq" id="WP_011237965.1">
    <property type="nucleotide sequence ID" value="NC_006513.1"/>
</dbReference>
<dbReference type="SMR" id="Q5P340"/>
<dbReference type="STRING" id="76114.ebB123"/>
<dbReference type="KEGG" id="eba:ebB123"/>
<dbReference type="eggNOG" id="COG0222">
    <property type="taxonomic scope" value="Bacteria"/>
</dbReference>
<dbReference type="HOGENOM" id="CLU_086499_3_2_4"/>
<dbReference type="OrthoDB" id="9811748at2"/>
<dbReference type="Proteomes" id="UP000006552">
    <property type="component" value="Chromosome"/>
</dbReference>
<dbReference type="GO" id="GO:0022625">
    <property type="term" value="C:cytosolic large ribosomal subunit"/>
    <property type="evidence" value="ECO:0007669"/>
    <property type="project" value="TreeGrafter"/>
</dbReference>
<dbReference type="GO" id="GO:0003729">
    <property type="term" value="F:mRNA binding"/>
    <property type="evidence" value="ECO:0007669"/>
    <property type="project" value="TreeGrafter"/>
</dbReference>
<dbReference type="GO" id="GO:0003735">
    <property type="term" value="F:structural constituent of ribosome"/>
    <property type="evidence" value="ECO:0007669"/>
    <property type="project" value="InterPro"/>
</dbReference>
<dbReference type="GO" id="GO:0006412">
    <property type="term" value="P:translation"/>
    <property type="evidence" value="ECO:0007669"/>
    <property type="project" value="UniProtKB-UniRule"/>
</dbReference>
<dbReference type="CDD" id="cd00387">
    <property type="entry name" value="Ribosomal_L7_L12"/>
    <property type="match status" value="1"/>
</dbReference>
<dbReference type="FunFam" id="3.30.1390.10:FF:000001">
    <property type="entry name" value="50S ribosomal protein L7/L12"/>
    <property type="match status" value="1"/>
</dbReference>
<dbReference type="Gene3D" id="3.30.1390.10">
    <property type="match status" value="1"/>
</dbReference>
<dbReference type="Gene3D" id="1.20.5.710">
    <property type="entry name" value="Single helix bin"/>
    <property type="match status" value="1"/>
</dbReference>
<dbReference type="HAMAP" id="MF_00368">
    <property type="entry name" value="Ribosomal_bL12"/>
    <property type="match status" value="1"/>
</dbReference>
<dbReference type="InterPro" id="IPR000206">
    <property type="entry name" value="Ribosomal_bL12"/>
</dbReference>
<dbReference type="InterPro" id="IPR013823">
    <property type="entry name" value="Ribosomal_bL12_C"/>
</dbReference>
<dbReference type="InterPro" id="IPR014719">
    <property type="entry name" value="Ribosomal_bL12_C/ClpS-like"/>
</dbReference>
<dbReference type="InterPro" id="IPR008932">
    <property type="entry name" value="Ribosomal_bL12_oligo"/>
</dbReference>
<dbReference type="InterPro" id="IPR036235">
    <property type="entry name" value="Ribosomal_bL12_oligo_N_sf"/>
</dbReference>
<dbReference type="NCBIfam" id="TIGR00855">
    <property type="entry name" value="L12"/>
    <property type="match status" value="1"/>
</dbReference>
<dbReference type="PANTHER" id="PTHR45987">
    <property type="entry name" value="39S RIBOSOMAL PROTEIN L12"/>
    <property type="match status" value="1"/>
</dbReference>
<dbReference type="PANTHER" id="PTHR45987:SF4">
    <property type="entry name" value="LARGE RIBOSOMAL SUBUNIT PROTEIN BL12M"/>
    <property type="match status" value="1"/>
</dbReference>
<dbReference type="Pfam" id="PF00542">
    <property type="entry name" value="Ribosomal_L12"/>
    <property type="match status" value="1"/>
</dbReference>
<dbReference type="Pfam" id="PF16320">
    <property type="entry name" value="Ribosomal_L12_N"/>
    <property type="match status" value="1"/>
</dbReference>
<dbReference type="SUPFAM" id="SSF54736">
    <property type="entry name" value="ClpS-like"/>
    <property type="match status" value="1"/>
</dbReference>
<dbReference type="SUPFAM" id="SSF48300">
    <property type="entry name" value="Ribosomal protein L7/12, oligomerisation (N-terminal) domain"/>
    <property type="match status" value="1"/>
</dbReference>
<feature type="chain" id="PRO_0000243377" description="Large ribosomal subunit protein bL12">
    <location>
        <begin position="1"/>
        <end position="124"/>
    </location>
</feature>
<sequence>MAISKEDILEAVGSMTVMELNDLVKAFEEKFGVSAASMAVAAPGAGAAAAPVEEKTEFDVILLAAGEKKVEAIKVVRAATGLGLKEAKDLVDGAPKAVKEGISKADAEAIKKQLEDAGAKVEIK</sequence>
<name>RL7_AROAE</name>
<gene>
    <name evidence="1" type="primary">rplL</name>
    <name type="ordered locus">AZOSEA21490</name>
    <name type="ORF">ebB123</name>
</gene>
<comment type="function">
    <text evidence="1">Forms part of the ribosomal stalk which helps the ribosome interact with GTP-bound translation factors. Is thus essential for accurate translation.</text>
</comment>
<comment type="subunit">
    <text evidence="1">Homodimer. Part of the ribosomal stalk of the 50S ribosomal subunit. Forms a multimeric L10(L12)X complex, where L10 forms an elongated spine to which 2 to 4 L12 dimers bind in a sequential fashion. Binds GTP-bound translation factors.</text>
</comment>
<comment type="similarity">
    <text evidence="1">Belongs to the bacterial ribosomal protein bL12 family.</text>
</comment>